<feature type="chain" id="PRO_0000321230" description="Ribosome-binding factor A">
    <location>
        <begin position="1"/>
        <end position="141"/>
    </location>
</feature>
<name>RBFA_MARMM</name>
<dbReference type="EMBL" id="CP000449">
    <property type="protein sequence ID" value="ABI67327.1"/>
    <property type="molecule type" value="Genomic_DNA"/>
</dbReference>
<dbReference type="RefSeq" id="WP_011644971.1">
    <property type="nucleotide sequence ID" value="NC_008347.1"/>
</dbReference>
<dbReference type="SMR" id="Q0AK66"/>
<dbReference type="STRING" id="394221.Mmar10_3046"/>
<dbReference type="KEGG" id="mmr:Mmar10_3046"/>
<dbReference type="eggNOG" id="COG0858">
    <property type="taxonomic scope" value="Bacteria"/>
</dbReference>
<dbReference type="HOGENOM" id="CLU_089475_1_0_5"/>
<dbReference type="OrthoDB" id="9805051at2"/>
<dbReference type="Proteomes" id="UP000001964">
    <property type="component" value="Chromosome"/>
</dbReference>
<dbReference type="GO" id="GO:0005829">
    <property type="term" value="C:cytosol"/>
    <property type="evidence" value="ECO:0007669"/>
    <property type="project" value="TreeGrafter"/>
</dbReference>
<dbReference type="GO" id="GO:0043024">
    <property type="term" value="F:ribosomal small subunit binding"/>
    <property type="evidence" value="ECO:0007669"/>
    <property type="project" value="TreeGrafter"/>
</dbReference>
<dbReference type="GO" id="GO:0030490">
    <property type="term" value="P:maturation of SSU-rRNA"/>
    <property type="evidence" value="ECO:0007669"/>
    <property type="project" value="UniProtKB-UniRule"/>
</dbReference>
<dbReference type="Gene3D" id="3.30.300.20">
    <property type="match status" value="1"/>
</dbReference>
<dbReference type="HAMAP" id="MF_00003">
    <property type="entry name" value="RbfA"/>
    <property type="match status" value="1"/>
</dbReference>
<dbReference type="InterPro" id="IPR015946">
    <property type="entry name" value="KH_dom-like_a/b"/>
</dbReference>
<dbReference type="InterPro" id="IPR000238">
    <property type="entry name" value="RbfA"/>
</dbReference>
<dbReference type="InterPro" id="IPR023799">
    <property type="entry name" value="RbfA_dom_sf"/>
</dbReference>
<dbReference type="InterPro" id="IPR020053">
    <property type="entry name" value="Ribosome-bd_factorA_CS"/>
</dbReference>
<dbReference type="NCBIfam" id="NF001802">
    <property type="entry name" value="PRK00521.2-5"/>
    <property type="match status" value="1"/>
</dbReference>
<dbReference type="NCBIfam" id="TIGR00082">
    <property type="entry name" value="rbfA"/>
    <property type="match status" value="1"/>
</dbReference>
<dbReference type="PANTHER" id="PTHR33515">
    <property type="entry name" value="RIBOSOME-BINDING FACTOR A, CHLOROPLASTIC-RELATED"/>
    <property type="match status" value="1"/>
</dbReference>
<dbReference type="PANTHER" id="PTHR33515:SF1">
    <property type="entry name" value="RIBOSOME-BINDING FACTOR A, CHLOROPLASTIC-RELATED"/>
    <property type="match status" value="1"/>
</dbReference>
<dbReference type="Pfam" id="PF02033">
    <property type="entry name" value="RBFA"/>
    <property type="match status" value="1"/>
</dbReference>
<dbReference type="SUPFAM" id="SSF89919">
    <property type="entry name" value="Ribosome-binding factor A, RbfA"/>
    <property type="match status" value="1"/>
</dbReference>
<dbReference type="PROSITE" id="PS01319">
    <property type="entry name" value="RBFA"/>
    <property type="match status" value="1"/>
</dbReference>
<organism>
    <name type="scientific">Maricaulis maris (strain MCS10)</name>
    <name type="common">Caulobacter maris</name>
    <dbReference type="NCBI Taxonomy" id="394221"/>
    <lineage>
        <taxon>Bacteria</taxon>
        <taxon>Pseudomonadati</taxon>
        <taxon>Pseudomonadota</taxon>
        <taxon>Alphaproteobacteria</taxon>
        <taxon>Maricaulales</taxon>
        <taxon>Maricaulaceae</taxon>
        <taxon>Maricaulis</taxon>
    </lineage>
</organism>
<evidence type="ECO:0000255" key="1">
    <source>
        <dbReference type="HAMAP-Rule" id="MF_00003"/>
    </source>
</evidence>
<accession>Q0AK66</accession>
<proteinExistence type="inferred from homology"/>
<gene>
    <name evidence="1" type="primary">rbfA</name>
    <name type="ordered locus">Mmar10_3046</name>
</gene>
<comment type="function">
    <text evidence="1">One of several proteins that assist in the late maturation steps of the functional core of the 30S ribosomal subunit. Associates with free 30S ribosomal subunits (but not with 30S subunits that are part of 70S ribosomes or polysomes). Required for efficient processing of 16S rRNA. May interact with the 5'-terminal helix region of 16S rRNA.</text>
</comment>
<comment type="subunit">
    <text evidence="1">Monomer. Binds 30S ribosomal subunits, but not 50S ribosomal subunits or 70S ribosomes.</text>
</comment>
<comment type="subcellular location">
    <subcellularLocation>
        <location evidence="1">Cytoplasm</location>
    </subcellularLocation>
</comment>
<comment type="similarity">
    <text evidence="1">Belongs to the RbfA family.</text>
</comment>
<sequence>MARRQTHTSKGPSQRQLRAGELVRHALVGIIAREEFRDPDLEGQMISVTEVRPSPDLRVAKVYVAPLGRGDSAKLAAGLNRCAAFLRGRLGREIEMKFTPELHFHADNSFDTASHVDDLLNRPTVRKDLDATRGSEADAED</sequence>
<protein>
    <recommendedName>
        <fullName evidence="1">Ribosome-binding factor A</fullName>
    </recommendedName>
</protein>
<keyword id="KW-0963">Cytoplasm</keyword>
<keyword id="KW-1185">Reference proteome</keyword>
<keyword id="KW-0690">Ribosome biogenesis</keyword>
<reference key="1">
    <citation type="submission" date="2006-08" db="EMBL/GenBank/DDBJ databases">
        <title>Complete sequence of Maricaulis maris MCS10.</title>
        <authorList>
            <consortium name="US DOE Joint Genome Institute"/>
            <person name="Copeland A."/>
            <person name="Lucas S."/>
            <person name="Lapidus A."/>
            <person name="Barry K."/>
            <person name="Detter J.C."/>
            <person name="Glavina del Rio T."/>
            <person name="Hammon N."/>
            <person name="Israni S."/>
            <person name="Dalin E."/>
            <person name="Tice H."/>
            <person name="Pitluck S."/>
            <person name="Saunders E."/>
            <person name="Brettin T."/>
            <person name="Bruce D."/>
            <person name="Han C."/>
            <person name="Tapia R."/>
            <person name="Gilna P."/>
            <person name="Schmutz J."/>
            <person name="Larimer F."/>
            <person name="Land M."/>
            <person name="Hauser L."/>
            <person name="Kyrpides N."/>
            <person name="Mikhailova N."/>
            <person name="Viollier P."/>
            <person name="Stephens C."/>
            <person name="Richardson P."/>
        </authorList>
    </citation>
    <scope>NUCLEOTIDE SEQUENCE [LARGE SCALE GENOMIC DNA]</scope>
    <source>
        <strain>MCS10</strain>
    </source>
</reference>